<sequence>MSYPSQGHYLPPEHQYLTAATLASHGHEHLYAHSQLSDSPPRQDLAQRKRPKYTRSKTGCLTCRMKKIKCDETKPTCARCTHGQRECTWPDASSPRRRAPLRRGSIDDRPSTAGSSVSDDSSPSIRNSTPPRRFQMDSPESGLLPPPSARRNMDPFLQLPPVVAPESRHQHIRPRPPPFTPPQSEQHNLTLSPDPSEYCRYDRYDATYAQTHHLHSSHSSPSSRAPHMVTGIRGMGYSPESVHQWNSPPLLSPIESSSYQHYPLQERGMVGPSDNHHFRYQ</sequence>
<feature type="chain" id="PRO_0000462586" description="Transcription factor lfc1">
    <location>
        <begin position="1"/>
        <end position="281"/>
    </location>
</feature>
<feature type="DNA-binding region" description="Zn(2)-C6 fungal-type" evidence="1">
    <location>
        <begin position="60"/>
        <end position="87"/>
    </location>
</feature>
<gene>
    <name evidence="3" type="primary">lfc1</name>
</gene>
<accession>A0A455LJ99</accession>
<protein>
    <recommendedName>
        <fullName evidence="3">Transcription factor lfc1</fullName>
    </recommendedName>
    <alternativeName>
        <fullName evidence="3">Large fruiting body cap protein 1</fullName>
    </alternativeName>
</protein>
<keyword id="KW-0238">DNA-binding</keyword>
<keyword id="KW-0479">Metal-binding</keyword>
<keyword id="KW-0539">Nucleus</keyword>
<keyword id="KW-0804">Transcription</keyword>
<keyword id="KW-0805">Transcription regulation</keyword>
<name>LFC1_FLAVE</name>
<organism>
    <name type="scientific">Flammulina velutipes</name>
    <name type="common">Agaricus velutipes</name>
    <dbReference type="NCBI Taxonomy" id="38945"/>
    <lineage>
        <taxon>Eukaryota</taxon>
        <taxon>Fungi</taxon>
        <taxon>Dikarya</taxon>
        <taxon>Basidiomycota</taxon>
        <taxon>Agaricomycotina</taxon>
        <taxon>Agaricomycetes</taxon>
        <taxon>Agaricomycetidae</taxon>
        <taxon>Agaricales</taxon>
        <taxon>Marasmiineae</taxon>
        <taxon>Physalacriaceae</taxon>
        <taxon>Flammulina</taxon>
    </lineage>
</organism>
<evidence type="ECO:0000255" key="1">
    <source>
        <dbReference type="PROSITE-ProRule" id="PRU00227"/>
    </source>
</evidence>
<evidence type="ECO:0000269" key="2">
    <source>
    </source>
</evidence>
<evidence type="ECO:0000303" key="3">
    <source>
    </source>
</evidence>
<comment type="function">
    <text evidence="2">Transcription factor that acts as a negative regulator of basidioma development via repressing the expression of genes involved in basidioma development, including hydrophobins such as Hyd-1 and Hyd-8, lectins such as JRL1, as well as the fruiting body differentiation gene FVFD16.</text>
</comment>
<comment type="subcellular location">
    <subcellularLocation>
        <location evidence="1">Nucleus</location>
    </subcellularLocation>
</comment>
<comment type="developmental stage">
    <text evidence="2">Expression is dramatically decreased during basidioma development.</text>
</comment>
<comment type="disruption phenotype">
    <text evidence="2">Does not affect hyphal vegetative growth but promotes basidioma development and shortens cultivation time (PubMed:32356196). Significantly increases basidioma length and number (PubMed:32356196).</text>
</comment>
<comment type="biotechnology">
    <text evidence="2">The basidioma development regulatory function can be useful in mushroom breeding.</text>
</comment>
<dbReference type="EMBL" id="MH981942">
    <property type="protein sequence ID" value="AYF60168.1"/>
    <property type="molecule type" value="Genomic_DNA"/>
</dbReference>
<dbReference type="GO" id="GO:0005634">
    <property type="term" value="C:nucleus"/>
    <property type="evidence" value="ECO:0007669"/>
    <property type="project" value="TreeGrafter"/>
</dbReference>
<dbReference type="GO" id="GO:0000981">
    <property type="term" value="F:DNA-binding transcription factor activity, RNA polymerase II-specific"/>
    <property type="evidence" value="ECO:0007669"/>
    <property type="project" value="InterPro"/>
</dbReference>
<dbReference type="GO" id="GO:0000976">
    <property type="term" value="F:transcription cis-regulatory region binding"/>
    <property type="evidence" value="ECO:0007669"/>
    <property type="project" value="TreeGrafter"/>
</dbReference>
<dbReference type="GO" id="GO:0008270">
    <property type="term" value="F:zinc ion binding"/>
    <property type="evidence" value="ECO:0007669"/>
    <property type="project" value="InterPro"/>
</dbReference>
<dbReference type="GO" id="GO:0045944">
    <property type="term" value="P:positive regulation of transcription by RNA polymerase II"/>
    <property type="evidence" value="ECO:0007669"/>
    <property type="project" value="TreeGrafter"/>
</dbReference>
<dbReference type="CDD" id="cd00067">
    <property type="entry name" value="GAL4"/>
    <property type="match status" value="1"/>
</dbReference>
<dbReference type="Gene3D" id="4.10.240.10">
    <property type="entry name" value="Zn(2)-C6 fungal-type DNA-binding domain"/>
    <property type="match status" value="1"/>
</dbReference>
<dbReference type="InterPro" id="IPR036864">
    <property type="entry name" value="Zn2-C6_fun-type_DNA-bd_sf"/>
</dbReference>
<dbReference type="InterPro" id="IPR001138">
    <property type="entry name" value="Zn2Cys6_DnaBD"/>
</dbReference>
<dbReference type="PANTHER" id="PTHR37534">
    <property type="entry name" value="TRANSCRIPTIONAL ACTIVATOR PROTEIN UGA3"/>
    <property type="match status" value="1"/>
</dbReference>
<dbReference type="PANTHER" id="PTHR37534:SF7">
    <property type="entry name" value="TRANSCRIPTIONAL ACTIVATOR PROTEIN UGA3"/>
    <property type="match status" value="1"/>
</dbReference>
<dbReference type="Pfam" id="PF00172">
    <property type="entry name" value="Zn_clus"/>
    <property type="match status" value="1"/>
</dbReference>
<dbReference type="SMART" id="SM00066">
    <property type="entry name" value="GAL4"/>
    <property type="match status" value="1"/>
</dbReference>
<dbReference type="SUPFAM" id="SSF57701">
    <property type="entry name" value="Zn2/Cys6 DNA-binding domain"/>
    <property type="match status" value="1"/>
</dbReference>
<dbReference type="PROSITE" id="PS00463">
    <property type="entry name" value="ZN2_CY6_FUNGAL_1"/>
    <property type="match status" value="1"/>
</dbReference>
<dbReference type="PROSITE" id="PS50048">
    <property type="entry name" value="ZN2_CY6_FUNGAL_2"/>
    <property type="match status" value="1"/>
</dbReference>
<reference key="1">
    <citation type="journal article" date="2020" name="Appl. Microbiol. Biotechnol.">
        <title>A putative transcription factor LFC1 negatively regulates development and yield of winter mushroom.</title>
        <authorList>
            <person name="Wu T."/>
            <person name="Hu C."/>
            <person name="Xie B."/>
            <person name="Wei S."/>
            <person name="Zhang L."/>
            <person name="Zhu Z."/>
            <person name="Zhang Z."/>
            <person name="Li S."/>
        </authorList>
    </citation>
    <scope>NUCLEOTIDE SEQUENCE [GENOMIC DNA]</scope>
    <scope>DEVELOPMENTAL STAGE</scope>
    <scope>DISRUPTION PHENOTYPE</scope>
    <scope>FUNCTION</scope>
    <scope>BIOTECHNOLOGY</scope>
    <source>
        <strain>L11</strain>
    </source>
</reference>
<proteinExistence type="evidence at protein level"/>